<accession>B9IRU0</accession>
<gene>
    <name evidence="1" type="primary">atpH</name>
    <name type="ordered locus">BCQ_5148</name>
</gene>
<proteinExistence type="inferred from homology"/>
<name>ATPD_BACCQ</name>
<keyword id="KW-0066">ATP synthesis</keyword>
<keyword id="KW-1003">Cell membrane</keyword>
<keyword id="KW-0139">CF(1)</keyword>
<keyword id="KW-0375">Hydrogen ion transport</keyword>
<keyword id="KW-0406">Ion transport</keyword>
<keyword id="KW-0472">Membrane</keyword>
<keyword id="KW-0813">Transport</keyword>
<reference key="1">
    <citation type="journal article" date="2009" name="J. Bacteriol.">
        <title>Complete genome sequence of the extremophilic Bacillus cereus strain Q1 with industrial applications.</title>
        <authorList>
            <person name="Xiong Z."/>
            <person name="Jiang Y."/>
            <person name="Qi D."/>
            <person name="Lu H."/>
            <person name="Yang F."/>
            <person name="Yang J."/>
            <person name="Chen L."/>
            <person name="Sun L."/>
            <person name="Xu X."/>
            <person name="Xue Y."/>
            <person name="Zhu Y."/>
            <person name="Jin Q."/>
        </authorList>
    </citation>
    <scope>NUCLEOTIDE SEQUENCE [LARGE SCALE GENOMIC DNA]</scope>
    <source>
        <strain>Q1</strain>
    </source>
</reference>
<feature type="chain" id="PRO_1000184653" description="ATP synthase subunit delta">
    <location>
        <begin position="1"/>
        <end position="180"/>
    </location>
</feature>
<evidence type="ECO:0000255" key="1">
    <source>
        <dbReference type="HAMAP-Rule" id="MF_01416"/>
    </source>
</evidence>
<organism>
    <name type="scientific">Bacillus cereus (strain Q1)</name>
    <dbReference type="NCBI Taxonomy" id="361100"/>
    <lineage>
        <taxon>Bacteria</taxon>
        <taxon>Bacillati</taxon>
        <taxon>Bacillota</taxon>
        <taxon>Bacilli</taxon>
        <taxon>Bacillales</taxon>
        <taxon>Bacillaceae</taxon>
        <taxon>Bacillus</taxon>
        <taxon>Bacillus cereus group</taxon>
    </lineage>
</organism>
<dbReference type="EMBL" id="CP000227">
    <property type="protein sequence ID" value="ACM15548.1"/>
    <property type="molecule type" value="Genomic_DNA"/>
</dbReference>
<dbReference type="SMR" id="B9IRU0"/>
<dbReference type="KEGG" id="bcq:BCQ_5148"/>
<dbReference type="HOGENOM" id="CLU_085114_4_1_9"/>
<dbReference type="Proteomes" id="UP000000441">
    <property type="component" value="Chromosome"/>
</dbReference>
<dbReference type="GO" id="GO:0005886">
    <property type="term" value="C:plasma membrane"/>
    <property type="evidence" value="ECO:0007669"/>
    <property type="project" value="UniProtKB-SubCell"/>
</dbReference>
<dbReference type="GO" id="GO:0045259">
    <property type="term" value="C:proton-transporting ATP synthase complex"/>
    <property type="evidence" value="ECO:0007669"/>
    <property type="project" value="UniProtKB-KW"/>
</dbReference>
<dbReference type="GO" id="GO:0046933">
    <property type="term" value="F:proton-transporting ATP synthase activity, rotational mechanism"/>
    <property type="evidence" value="ECO:0007669"/>
    <property type="project" value="UniProtKB-UniRule"/>
</dbReference>
<dbReference type="Gene3D" id="1.10.520.20">
    <property type="entry name" value="N-terminal domain of the delta subunit of the F1F0-ATP synthase"/>
    <property type="match status" value="1"/>
</dbReference>
<dbReference type="HAMAP" id="MF_01416">
    <property type="entry name" value="ATP_synth_delta_bact"/>
    <property type="match status" value="1"/>
</dbReference>
<dbReference type="InterPro" id="IPR026015">
    <property type="entry name" value="ATP_synth_OSCP/delta_N_sf"/>
</dbReference>
<dbReference type="InterPro" id="IPR020781">
    <property type="entry name" value="ATPase_OSCP/d_CS"/>
</dbReference>
<dbReference type="InterPro" id="IPR000711">
    <property type="entry name" value="ATPase_OSCP/dsu"/>
</dbReference>
<dbReference type="NCBIfam" id="TIGR01145">
    <property type="entry name" value="ATP_synt_delta"/>
    <property type="match status" value="1"/>
</dbReference>
<dbReference type="NCBIfam" id="NF004402">
    <property type="entry name" value="PRK05758.2-2"/>
    <property type="match status" value="1"/>
</dbReference>
<dbReference type="NCBIfam" id="NF004403">
    <property type="entry name" value="PRK05758.2-4"/>
    <property type="match status" value="1"/>
</dbReference>
<dbReference type="PANTHER" id="PTHR11910">
    <property type="entry name" value="ATP SYNTHASE DELTA CHAIN"/>
    <property type="match status" value="1"/>
</dbReference>
<dbReference type="Pfam" id="PF00213">
    <property type="entry name" value="OSCP"/>
    <property type="match status" value="1"/>
</dbReference>
<dbReference type="PRINTS" id="PR00125">
    <property type="entry name" value="ATPASEDELTA"/>
</dbReference>
<dbReference type="SUPFAM" id="SSF47928">
    <property type="entry name" value="N-terminal domain of the delta subunit of the F1F0-ATP synthase"/>
    <property type="match status" value="1"/>
</dbReference>
<dbReference type="PROSITE" id="PS00389">
    <property type="entry name" value="ATPASE_DELTA"/>
    <property type="match status" value="1"/>
</dbReference>
<comment type="function">
    <text evidence="1">F(1)F(0) ATP synthase produces ATP from ADP in the presence of a proton or sodium gradient. F-type ATPases consist of two structural domains, F(1) containing the extramembraneous catalytic core and F(0) containing the membrane proton channel, linked together by a central stalk and a peripheral stalk. During catalysis, ATP synthesis in the catalytic domain of F(1) is coupled via a rotary mechanism of the central stalk subunits to proton translocation.</text>
</comment>
<comment type="function">
    <text evidence="1">This protein is part of the stalk that links CF(0) to CF(1). It either transmits conformational changes from CF(0) to CF(1) or is implicated in proton conduction.</text>
</comment>
<comment type="subunit">
    <text evidence="1">F-type ATPases have 2 components, F(1) - the catalytic core - and F(0) - the membrane proton channel. F(1) has five subunits: alpha(3), beta(3), gamma(1), delta(1), epsilon(1). F(0) has three main subunits: a(1), b(2) and c(10-14). The alpha and beta chains form an alternating ring which encloses part of the gamma chain. F(1) is attached to F(0) by a central stalk formed by the gamma and epsilon chains, while a peripheral stalk is formed by the delta and b chains.</text>
</comment>
<comment type="subcellular location">
    <subcellularLocation>
        <location evidence="1">Cell membrane</location>
        <topology evidence="1">Peripheral membrane protein</topology>
    </subcellularLocation>
</comment>
<comment type="similarity">
    <text evidence="1">Belongs to the ATPase delta chain family.</text>
</comment>
<sequence length="180" mass="20482">MSNGIVAKRYAVALFKIAKEKHVLEMFEEELRLVQNVYVKNGELHSFLTQPNISKEQKKTFLANVFGSVSESILNTLYILIDNKRIDILPEIADEYVVLANEERNVADATVYSTRLLSEEEKLNIAEAFAKRTGKDAIRVKNVVDEDLLGGIKVRIGNRIYDGSLQGKLARIQRELMKNR</sequence>
<protein>
    <recommendedName>
        <fullName evidence="1">ATP synthase subunit delta</fullName>
    </recommendedName>
    <alternativeName>
        <fullName evidence="1">ATP synthase F(1) sector subunit delta</fullName>
    </alternativeName>
    <alternativeName>
        <fullName evidence="1">F-type ATPase subunit delta</fullName>
        <shortName evidence="1">F-ATPase subunit delta</shortName>
    </alternativeName>
</protein>